<reference key="1">
    <citation type="journal article" date="1996" name="Proc. Natl. Acad. Sci. U.S.A.">
        <title>msg1, a novel melanocyte-specific gene, encodes a nuclear protein and is associated with pigmentation.</title>
        <authorList>
            <person name="Shioda T."/>
            <person name="Fenner M.H."/>
            <person name="Isselbacher K.J."/>
        </authorList>
    </citation>
    <scope>NUCLEOTIDE SEQUENCE [MRNA]</scope>
</reference>
<reference key="2">
    <citation type="journal article" date="2004" name="Genome Res.">
        <title>The status, quality, and expansion of the NIH full-length cDNA project: the Mammalian Gene Collection (MGC).</title>
        <authorList>
            <consortium name="The MGC Project Team"/>
        </authorList>
    </citation>
    <scope>NUCLEOTIDE SEQUENCE [LARGE SCALE MRNA]</scope>
    <source>
        <strain>C57BL/6J</strain>
        <tissue>Brain</tissue>
    </source>
</reference>
<reference key="3">
    <citation type="journal article" date="2000" name="J. Biol. Chem.">
        <title>The MSG1 non-DNA-binding transactivator binds to the p300/CBP coactivators, enhancing their functional link to the Smad transcription factors.</title>
        <authorList>
            <person name="Yahata T."/>
            <person name="de Caestecker M.P."/>
            <person name="Lechleider R.J."/>
            <person name="Andriole S."/>
            <person name="Roberts A.B."/>
            <person name="Isselbacher K.J."/>
            <person name="Shioda T."/>
        </authorList>
    </citation>
    <scope>FUNCTION</scope>
    <scope>INTERACTION WITH CREBBP AND EP300</scope>
</reference>
<reference key="4">
    <citation type="journal article" date="2001" name="Genes Dev.">
        <title>Selective coactivation of estrogen-dependent transcription by CITED1 CBP/p300-binding protein.</title>
        <authorList>
            <person name="Yahata T."/>
            <person name="Shao W."/>
            <person name="Endoh H."/>
            <person name="Hur J."/>
            <person name="Coser K.R."/>
            <person name="Sun H."/>
            <person name="Ueda Y."/>
            <person name="Kato S."/>
            <person name="Isselbacher K.J."/>
            <person name="Brown M."/>
            <person name="Shioda T."/>
        </authorList>
    </citation>
    <scope>SUBCELLULAR LOCATION</scope>
    <scope>TISSUE SPECIFICITY</scope>
</reference>
<reference key="5">
    <citation type="journal article" date="2004" name="Mol. Cell. Biol.">
        <title>Cited1 is required in trophoblasts for placental development and for embryo growth and survival.</title>
        <authorList>
            <person name="Rodriguez T.A."/>
            <person name="Sparrow D.B."/>
            <person name="Scott A.N."/>
            <person name="Withington S.L."/>
            <person name="Preis J.I."/>
            <person name="Michalicek J."/>
            <person name="Clements M."/>
            <person name="Tsang T.E."/>
            <person name="Shioda T."/>
            <person name="Beddington R.S."/>
            <person name="Dunwoodie S.L."/>
        </authorList>
    </citation>
    <scope>FUNCTION</scope>
    <scope>DISRUPTION PHENOTYPE</scope>
    <scope>SUBCELLULAR LOCATION</scope>
    <scope>DEVELOPMENTAL STAGE</scope>
</reference>
<reference key="6">
    <citation type="journal article" date="2007" name="Mol. Cell. Biol.">
        <title>An EGR2/CITED1 transcription factor complex and the 14-3-3sigma tumor suppressor are involved in regulating ErbB2 expression in a transgenic-mouse model of human breast cancer.</title>
        <authorList>
            <person name="Dillon R.L."/>
            <person name="Brown S.T."/>
            <person name="Ling C."/>
            <person name="Shioda T."/>
            <person name="Muller W.J."/>
        </authorList>
    </citation>
    <scope>INTERACTION WITH EGR2</scope>
    <scope>SUBCELLULAR LOCATION</scope>
    <scope>TISSUE SPECIFICITY</scope>
</reference>
<reference key="7">
    <citation type="journal article" date="2008" name="Endocrinology">
        <title>CBP/p300-interacting protein CITED1 modulates parathyroid hormone regulation of osteoblastic differentiation.</title>
        <authorList>
            <person name="Yang D."/>
            <person name="Guo J."/>
            <person name="Divieti P."/>
            <person name="Shioda T."/>
            <person name="Bringhurst F.R."/>
        </authorList>
    </citation>
    <scope>FUNCTION</scope>
    <scope>DISRUPTION PHENOTYPE</scope>
    <scope>TISSUE SPECIFICITY</scope>
    <scope>INDUCTION</scope>
</reference>
<comment type="function">
    <text evidence="3 5 7">Transcriptional coactivator of the p300/CBP-mediated transcription complex. Enhances SMAD-mediated transcription by strengthening the functional link between the DNA-binding SMAD transcription factors and the p300/CBP transcription coactivator complex. Stimulates estrogen-dependent transactivation activity mediated by estrogen receptors signaling; stabilizes the interaction of estrogen receptor ESR1 and histone acetyltransferase EP300. Positively regulates TGF-beta signaling through its association with the SMAD/p300/CBP-mediated transcriptional coactivator complex. Induces transcription from estrogen-responsive promoters and protection against cell death. Potentiates EGR2-mediated transcriptional activation activity from the ERBB2 promoter. Acts as an inhibitor of osteoblastic mineralization through a cAMP-dependent parathyroid hormone receptor signaling. May play a role in pigmentation of melanocytes. Associates with chromatin to the estrogen-responsive TGF-alpha promoter region in a estrogen-dependent manner.</text>
</comment>
<comment type="subunit">
    <text evidence="1 3 6">Homodimer. Binds to RBM14. Interacts (via N-terminus) with HSPA8; the interaction suppresses the association of CITED1 with p300/CBP and SMAD-mediated transcription transactivation. Interacts (via C-terminus) with TOX3 (via HGM box); the interaction increases estrogen-response element (ERE)-dependent transcription and protection against cell death. Interacts with ESR1; the interaction occurs in a estrogen-dependent manner (By similarity). Interacts (unphosphorylated form preferentially and via C-terminus) with EP300. Interacts (via C-terminus) with CREBBP. Interacts with EGR2.</text>
</comment>
<comment type="subcellular location">
    <subcellularLocation>
        <location evidence="4 5 6">Nucleus</location>
    </subcellularLocation>
    <subcellularLocation>
        <location evidence="1">Cytoplasm</location>
    </subcellularLocation>
    <text evidence="1">Shuttles between the nucleus and the cytoplasm by a nuclear export signal (NES) and in a CRM1-dependent manner.</text>
</comment>
<comment type="tissue specificity">
    <text evidence="4 6 7">Expressed in calvarial osteoblasts. Expressed in nulliparous mammary epithelial cells; absent in pregnant mice and in lacting mammary glands. Also expressed in mammary tumors (at protein level). Expressed only in melanocytes and testis. Expressed at high levels in the strongly pigmented melanoma cells but at low levels in the weakly pigmented cells.</text>
</comment>
<comment type="developmental stage">
    <text evidence="5">Expressed in trophectoderm-derived cells of the placenta.</text>
</comment>
<comment type="induction">
    <text evidence="7">Up-regulated by parathyroid hormone, forskolin and phorbol ester in osteoblasts.</text>
</comment>
<comment type="PTM">
    <text evidence="1">Phosphorylated. Phosphorylation changes in a cell cycle-dependent manner and reduces its transcriptional cofactor activity (By similarity).</text>
</comment>
<comment type="disruption phenotype">
    <text evidence="5 7">Mice die shortly after birth. Mice show an abnormal placental development; the spongiotrophoblast layer is irregular in shape and enlarged while the labyrinthine layer is reduced in size, the blood spaces within the labyrinthine are disrupted. Produces more mineralized bone nodules and deposited twice as much calcium in the matrix.</text>
</comment>
<comment type="similarity">
    <text evidence="8">Belongs to the CITED family.</text>
</comment>
<organism>
    <name type="scientific">Mus musculus</name>
    <name type="common">Mouse</name>
    <dbReference type="NCBI Taxonomy" id="10090"/>
    <lineage>
        <taxon>Eukaryota</taxon>
        <taxon>Metazoa</taxon>
        <taxon>Chordata</taxon>
        <taxon>Craniata</taxon>
        <taxon>Vertebrata</taxon>
        <taxon>Euteleostomi</taxon>
        <taxon>Mammalia</taxon>
        <taxon>Eutheria</taxon>
        <taxon>Euarchontoglires</taxon>
        <taxon>Glires</taxon>
        <taxon>Rodentia</taxon>
        <taxon>Myomorpha</taxon>
        <taxon>Muroidea</taxon>
        <taxon>Muridae</taxon>
        <taxon>Murinae</taxon>
        <taxon>Mus</taxon>
        <taxon>Mus</taxon>
    </lineage>
</organism>
<protein>
    <recommendedName>
        <fullName>Cbp/p300-interacting transactivator 1</fullName>
    </recommendedName>
    <alternativeName>
        <fullName>Melanocyte-specific protein 1</fullName>
    </alternativeName>
</protein>
<evidence type="ECO:0000250" key="1"/>
<evidence type="ECO:0000256" key="2">
    <source>
        <dbReference type="SAM" id="MobiDB-lite"/>
    </source>
</evidence>
<evidence type="ECO:0000269" key="3">
    <source>
    </source>
</evidence>
<evidence type="ECO:0000269" key="4">
    <source>
    </source>
</evidence>
<evidence type="ECO:0000269" key="5">
    <source>
    </source>
</evidence>
<evidence type="ECO:0000269" key="6">
    <source>
    </source>
</evidence>
<evidence type="ECO:0000269" key="7">
    <source>
    </source>
</evidence>
<evidence type="ECO:0000305" key="8"/>
<accession>P97769</accession>
<keyword id="KW-0010">Activator</keyword>
<keyword id="KW-0053">Apoptosis</keyword>
<keyword id="KW-0963">Cytoplasm</keyword>
<keyword id="KW-0217">Developmental protein</keyword>
<keyword id="KW-0221">Differentiation</keyword>
<keyword id="KW-0539">Nucleus</keyword>
<keyword id="KW-0597">Phosphoprotein</keyword>
<keyword id="KW-1185">Reference proteome</keyword>
<keyword id="KW-0804">Transcription</keyword>
<keyword id="KW-0805">Transcription regulation</keyword>
<proteinExistence type="evidence at protein level"/>
<name>CITE1_MOUSE</name>
<feature type="chain" id="PRO_0000144725" description="Cbp/p300-interacting transactivator 1">
    <location>
        <begin position="1"/>
        <end position="203"/>
    </location>
</feature>
<feature type="region of interest" description="Disordered" evidence="2">
    <location>
        <begin position="1"/>
        <end position="24"/>
    </location>
</feature>
<feature type="region of interest" description="Disordered" evidence="2">
    <location>
        <begin position="51"/>
        <end position="86"/>
    </location>
</feature>
<feature type="short sequence motif" description="Nuclear export signal" evidence="1">
    <location>
        <begin position="168"/>
        <end position="177"/>
    </location>
</feature>
<feature type="compositionally biased region" description="Low complexity" evidence="2">
    <location>
        <begin position="61"/>
        <end position="84"/>
    </location>
</feature>
<gene>
    <name type="primary">Cited1</name>
    <name type="synonym">Msg1</name>
</gene>
<sequence length="203" mass="20800">MPTMSRPALDVKGGTTSGKEDANQEMNSLAYSNLGVKDRKAVTVLHYPGVTANGAKANGVPTSSSGSTSPIGSPTATPSSKPPSFNLHPTPHLMASMQLQKLNSQYQGAAATAAAALTGAGLPGEEEPMQNWVTAPLVVGGSPGSVSPPAGAQSPALIDSDPVDEEVLMSLVVELGLDRANELPELWLGQNEFDFTADFPSGC</sequence>
<dbReference type="EMBL" id="U65091">
    <property type="protein sequence ID" value="AAC53048.1"/>
    <property type="molecule type" value="mRNA"/>
</dbReference>
<dbReference type="EMBL" id="BC052030">
    <property type="protein sequence ID" value="AAH52030.1"/>
    <property type="molecule type" value="mRNA"/>
</dbReference>
<dbReference type="CCDS" id="CCDS30322.1"/>
<dbReference type="PIR" id="JC6113">
    <property type="entry name" value="JC6113"/>
</dbReference>
<dbReference type="RefSeq" id="NP_001263395.1">
    <property type="nucleotide sequence ID" value="NM_001276466.1"/>
</dbReference>
<dbReference type="RefSeq" id="NP_001263402.1">
    <property type="nucleotide sequence ID" value="NM_001276473.1"/>
</dbReference>
<dbReference type="RefSeq" id="NP_001263403.1">
    <property type="nucleotide sequence ID" value="NM_001276474.1"/>
</dbReference>
<dbReference type="RefSeq" id="NP_031735.1">
    <property type="nucleotide sequence ID" value="NM_007709.4"/>
</dbReference>
<dbReference type="BioGRID" id="198721">
    <property type="interactions" value="1"/>
</dbReference>
<dbReference type="FunCoup" id="P97769">
    <property type="interactions" value="1029"/>
</dbReference>
<dbReference type="IntAct" id="P97769">
    <property type="interactions" value="1"/>
</dbReference>
<dbReference type="STRING" id="10090.ENSMUSP00000098890"/>
<dbReference type="GlyGen" id="P97769">
    <property type="glycosylation" value="1 site"/>
</dbReference>
<dbReference type="iPTMnet" id="P97769"/>
<dbReference type="PhosphoSitePlus" id="P97769"/>
<dbReference type="PaxDb" id="10090-ENSMUSP00000098890"/>
<dbReference type="ProteomicsDB" id="283923"/>
<dbReference type="Antibodypedia" id="13694">
    <property type="antibodies" value="326 antibodies from 25 providers"/>
</dbReference>
<dbReference type="DNASU" id="12705"/>
<dbReference type="Ensembl" id="ENSMUST00000050551.10">
    <property type="protein sequence ID" value="ENSMUSP00000051789.4"/>
    <property type="gene ID" value="ENSMUSG00000051159.17"/>
</dbReference>
<dbReference type="Ensembl" id="ENSMUST00000101336.10">
    <property type="protein sequence ID" value="ENSMUSP00000098890.4"/>
    <property type="gene ID" value="ENSMUSG00000051159.17"/>
</dbReference>
<dbReference type="GeneID" id="12705"/>
<dbReference type="KEGG" id="mmu:12705"/>
<dbReference type="UCSC" id="uc009tyn.3">
    <property type="organism name" value="mouse"/>
</dbReference>
<dbReference type="AGR" id="MGI:108023"/>
<dbReference type="CTD" id="4435"/>
<dbReference type="MGI" id="MGI:108023">
    <property type="gene designation" value="Cited1"/>
</dbReference>
<dbReference type="VEuPathDB" id="HostDB:ENSMUSG00000051159"/>
<dbReference type="eggNOG" id="ENOG502S282">
    <property type="taxonomic scope" value="Eukaryota"/>
</dbReference>
<dbReference type="GeneTree" id="ENSGT00530000063624"/>
<dbReference type="HOGENOM" id="CLU_100627_0_0_1"/>
<dbReference type="InParanoid" id="P97769"/>
<dbReference type="OMA" id="NSQYHGV"/>
<dbReference type="OrthoDB" id="8939897at2759"/>
<dbReference type="PhylomeDB" id="P97769"/>
<dbReference type="TreeFam" id="TF331915"/>
<dbReference type="Reactome" id="R-MMU-8866907">
    <property type="pathway name" value="Activation of the TFAP2 (AP-2) family of transcription factors"/>
</dbReference>
<dbReference type="Reactome" id="R-MMU-9018519">
    <property type="pathway name" value="Estrogen-dependent gene expression"/>
</dbReference>
<dbReference type="BioGRID-ORCS" id="12705">
    <property type="hits" value="1 hit in 79 CRISPR screens"/>
</dbReference>
<dbReference type="ChiTaRS" id="Cited1">
    <property type="organism name" value="mouse"/>
</dbReference>
<dbReference type="PRO" id="PR:P97769"/>
<dbReference type="Proteomes" id="UP000000589">
    <property type="component" value="Chromosome X"/>
</dbReference>
<dbReference type="RNAct" id="P97769">
    <property type="molecule type" value="protein"/>
</dbReference>
<dbReference type="Bgee" id="ENSMUSG00000051159">
    <property type="expression patterns" value="Expressed in placenta labyrinth and 175 other cell types or tissues"/>
</dbReference>
<dbReference type="ExpressionAtlas" id="P97769">
    <property type="expression patterns" value="baseline and differential"/>
</dbReference>
<dbReference type="GO" id="GO:0005737">
    <property type="term" value="C:cytoplasm"/>
    <property type="evidence" value="ECO:0000314"/>
    <property type="project" value="UniProtKB"/>
</dbReference>
<dbReference type="GO" id="GO:0005829">
    <property type="term" value="C:cytosol"/>
    <property type="evidence" value="ECO:0000314"/>
    <property type="project" value="UniProtKB"/>
</dbReference>
<dbReference type="GO" id="GO:0005634">
    <property type="term" value="C:nucleus"/>
    <property type="evidence" value="ECO:0000314"/>
    <property type="project" value="UniProtKB"/>
</dbReference>
<dbReference type="GO" id="GO:0003682">
    <property type="term" value="F:chromatin binding"/>
    <property type="evidence" value="ECO:0000314"/>
    <property type="project" value="UniProtKB"/>
</dbReference>
<dbReference type="GO" id="GO:0070410">
    <property type="term" value="F:co-SMAD binding"/>
    <property type="evidence" value="ECO:0007669"/>
    <property type="project" value="Ensembl"/>
</dbReference>
<dbReference type="GO" id="GO:0050693">
    <property type="term" value="F:LBD domain binding"/>
    <property type="evidence" value="ECO:0007669"/>
    <property type="project" value="Ensembl"/>
</dbReference>
<dbReference type="GO" id="GO:0042803">
    <property type="term" value="F:protein homodimerization activity"/>
    <property type="evidence" value="ECO:0000250"/>
    <property type="project" value="UniProtKB"/>
</dbReference>
<dbReference type="GO" id="GO:0003713">
    <property type="term" value="F:transcription coactivator activity"/>
    <property type="evidence" value="ECO:0000250"/>
    <property type="project" value="UniProtKB"/>
</dbReference>
<dbReference type="GO" id="GO:0006915">
    <property type="term" value="P:apoptotic process"/>
    <property type="evidence" value="ECO:0007669"/>
    <property type="project" value="UniProtKB-KW"/>
</dbReference>
<dbReference type="GO" id="GO:0007420">
    <property type="term" value="P:brain development"/>
    <property type="evidence" value="ECO:0000270"/>
    <property type="project" value="UniProtKB"/>
</dbReference>
<dbReference type="GO" id="GO:0060711">
    <property type="term" value="P:labyrinthine layer development"/>
    <property type="evidence" value="ECO:0000315"/>
    <property type="project" value="MGI"/>
</dbReference>
<dbReference type="GO" id="GO:0042438">
    <property type="term" value="P:melanin biosynthetic process"/>
    <property type="evidence" value="ECO:0000314"/>
    <property type="project" value="UniProtKB"/>
</dbReference>
<dbReference type="GO" id="GO:0030318">
    <property type="term" value="P:melanocyte differentiation"/>
    <property type="evidence" value="ECO:0000270"/>
    <property type="project" value="UniProtKB"/>
</dbReference>
<dbReference type="GO" id="GO:0045892">
    <property type="term" value="P:negative regulation of DNA-templated transcription"/>
    <property type="evidence" value="ECO:0000250"/>
    <property type="project" value="UniProtKB"/>
</dbReference>
<dbReference type="GO" id="GO:0043524">
    <property type="term" value="P:negative regulation of neuron apoptotic process"/>
    <property type="evidence" value="ECO:0000250"/>
    <property type="project" value="UniProtKB"/>
</dbReference>
<dbReference type="GO" id="GO:0045668">
    <property type="term" value="P:negative regulation of osteoblast differentiation"/>
    <property type="evidence" value="ECO:0000315"/>
    <property type="project" value="UniProtKB"/>
</dbReference>
<dbReference type="GO" id="GO:0006913">
    <property type="term" value="P:nucleocytoplasmic transport"/>
    <property type="evidence" value="ECO:0000250"/>
    <property type="project" value="UniProtKB"/>
</dbReference>
<dbReference type="GO" id="GO:0043473">
    <property type="term" value="P:pigmentation"/>
    <property type="evidence" value="ECO:0000314"/>
    <property type="project" value="UniProtKB"/>
</dbReference>
<dbReference type="GO" id="GO:0001890">
    <property type="term" value="P:placenta development"/>
    <property type="evidence" value="ECO:0000315"/>
    <property type="project" value="UniProtKB"/>
</dbReference>
<dbReference type="GO" id="GO:0045893">
    <property type="term" value="P:positive regulation of DNA-templated transcription"/>
    <property type="evidence" value="ECO:0000314"/>
    <property type="project" value="UniProtKB"/>
</dbReference>
<dbReference type="GO" id="GO:0010628">
    <property type="term" value="P:positive regulation of gene expression"/>
    <property type="evidence" value="ECO:0000314"/>
    <property type="project" value="UniProtKB"/>
</dbReference>
<dbReference type="GO" id="GO:0045944">
    <property type="term" value="P:positive regulation of transcription by RNA polymerase II"/>
    <property type="evidence" value="ECO:0007669"/>
    <property type="project" value="Ensembl"/>
</dbReference>
<dbReference type="GO" id="GO:0051591">
    <property type="term" value="P:response to cAMP"/>
    <property type="evidence" value="ECO:0000314"/>
    <property type="project" value="UniProtKB"/>
</dbReference>
<dbReference type="GO" id="GO:0034097">
    <property type="term" value="P:response to cytokine"/>
    <property type="evidence" value="ECO:0000314"/>
    <property type="project" value="UniProtKB"/>
</dbReference>
<dbReference type="GO" id="GO:0043627">
    <property type="term" value="P:response to estrogen"/>
    <property type="evidence" value="ECO:0007669"/>
    <property type="project" value="Ensembl"/>
</dbReference>
<dbReference type="GO" id="GO:0032868">
    <property type="term" value="P:response to insulin"/>
    <property type="evidence" value="ECO:0000314"/>
    <property type="project" value="UniProtKB"/>
</dbReference>
<dbReference type="GO" id="GO:0070555">
    <property type="term" value="P:response to interleukin-1"/>
    <property type="evidence" value="ECO:0000314"/>
    <property type="project" value="UniProtKB"/>
</dbReference>
<dbReference type="GO" id="GO:0071105">
    <property type="term" value="P:response to interleukin-11"/>
    <property type="evidence" value="ECO:0000314"/>
    <property type="project" value="UniProtKB"/>
</dbReference>
<dbReference type="GO" id="GO:0070669">
    <property type="term" value="P:response to interleukin-2"/>
    <property type="evidence" value="ECO:0000314"/>
    <property type="project" value="UniProtKB"/>
</dbReference>
<dbReference type="GO" id="GO:0070670">
    <property type="term" value="P:response to interleukin-4"/>
    <property type="evidence" value="ECO:0000314"/>
    <property type="project" value="UniProtKB"/>
</dbReference>
<dbReference type="GO" id="GO:0070741">
    <property type="term" value="P:response to interleukin-6"/>
    <property type="evidence" value="ECO:0000314"/>
    <property type="project" value="UniProtKB"/>
</dbReference>
<dbReference type="GO" id="GO:0071104">
    <property type="term" value="P:response to interleukin-9"/>
    <property type="evidence" value="ECO:0000314"/>
    <property type="project" value="UniProtKB"/>
</dbReference>
<dbReference type="GO" id="GO:0032496">
    <property type="term" value="P:response to lipopolysaccharide"/>
    <property type="evidence" value="ECO:0000314"/>
    <property type="project" value="UniProtKB"/>
</dbReference>
<dbReference type="GO" id="GO:0071107">
    <property type="term" value="P:response to parathyroid hormone"/>
    <property type="evidence" value="ECO:0000314"/>
    <property type="project" value="UniProtKB"/>
</dbReference>
<dbReference type="GO" id="GO:0071559">
    <property type="term" value="P:response to transforming growth factor beta"/>
    <property type="evidence" value="ECO:0000250"/>
    <property type="project" value="UniProtKB"/>
</dbReference>
<dbReference type="GO" id="GO:0034341">
    <property type="term" value="P:response to type II interferon"/>
    <property type="evidence" value="ECO:0000314"/>
    <property type="project" value="UniProtKB"/>
</dbReference>
<dbReference type="GO" id="GO:0060395">
    <property type="term" value="P:SMAD protein signal transduction"/>
    <property type="evidence" value="ECO:0007669"/>
    <property type="project" value="Ensembl"/>
</dbReference>
<dbReference type="GO" id="GO:0060712">
    <property type="term" value="P:spongiotrophoblast layer development"/>
    <property type="evidence" value="ECO:0000315"/>
    <property type="project" value="MGI"/>
</dbReference>
<dbReference type="GO" id="GO:0007179">
    <property type="term" value="P:transforming growth factor beta receptor signaling pathway"/>
    <property type="evidence" value="ECO:0007669"/>
    <property type="project" value="Ensembl"/>
</dbReference>
<dbReference type="GO" id="GO:0001570">
    <property type="term" value="P:vasculogenesis"/>
    <property type="evidence" value="ECO:0000315"/>
    <property type="project" value="MGI"/>
</dbReference>
<dbReference type="FunFam" id="6.10.140.2200:FF:000002">
    <property type="entry name" value="cbp/p300-interacting transactivator 1 isoform X2"/>
    <property type="match status" value="1"/>
</dbReference>
<dbReference type="Gene3D" id="6.10.140.2200">
    <property type="match status" value="1"/>
</dbReference>
<dbReference type="InterPro" id="IPR007576">
    <property type="entry name" value="CITED"/>
</dbReference>
<dbReference type="PANTHER" id="PTHR17045:SF6">
    <property type="entry name" value="CBP_P300-INTERACTING TRANSACTIVATOR 1"/>
    <property type="match status" value="1"/>
</dbReference>
<dbReference type="PANTHER" id="PTHR17045">
    <property type="entry name" value="MELANOCYTE SPECIFIC GENE RELATED CITED"/>
    <property type="match status" value="1"/>
</dbReference>
<dbReference type="Pfam" id="PF04487">
    <property type="entry name" value="CITED"/>
    <property type="match status" value="1"/>
</dbReference>